<evidence type="ECO:0000255" key="1">
    <source>
        <dbReference type="HAMAP-Rule" id="MF_00711"/>
    </source>
</evidence>
<name>GCSP_BURM9</name>
<dbReference type="EC" id="1.4.4.2" evidence="1"/>
<dbReference type="EMBL" id="CP000546">
    <property type="protein sequence ID" value="ABN00694.1"/>
    <property type="molecule type" value="Genomic_DNA"/>
</dbReference>
<dbReference type="RefSeq" id="WP_004195877.1">
    <property type="nucleotide sequence ID" value="NC_008836.1"/>
</dbReference>
<dbReference type="SMR" id="A2S6F6"/>
<dbReference type="GeneID" id="92980672"/>
<dbReference type="KEGG" id="bml:BMA10229_A1544"/>
<dbReference type="HOGENOM" id="CLU_004620_2_1_4"/>
<dbReference type="Proteomes" id="UP000002283">
    <property type="component" value="Chromosome I"/>
</dbReference>
<dbReference type="GO" id="GO:0005829">
    <property type="term" value="C:cytosol"/>
    <property type="evidence" value="ECO:0007669"/>
    <property type="project" value="TreeGrafter"/>
</dbReference>
<dbReference type="GO" id="GO:0005960">
    <property type="term" value="C:glycine cleavage complex"/>
    <property type="evidence" value="ECO:0007669"/>
    <property type="project" value="TreeGrafter"/>
</dbReference>
<dbReference type="GO" id="GO:0016594">
    <property type="term" value="F:glycine binding"/>
    <property type="evidence" value="ECO:0007669"/>
    <property type="project" value="TreeGrafter"/>
</dbReference>
<dbReference type="GO" id="GO:0004375">
    <property type="term" value="F:glycine dehydrogenase (decarboxylating) activity"/>
    <property type="evidence" value="ECO:0007669"/>
    <property type="project" value="UniProtKB-EC"/>
</dbReference>
<dbReference type="GO" id="GO:0030170">
    <property type="term" value="F:pyridoxal phosphate binding"/>
    <property type="evidence" value="ECO:0007669"/>
    <property type="project" value="TreeGrafter"/>
</dbReference>
<dbReference type="GO" id="GO:0019464">
    <property type="term" value="P:glycine decarboxylation via glycine cleavage system"/>
    <property type="evidence" value="ECO:0007669"/>
    <property type="project" value="UniProtKB-UniRule"/>
</dbReference>
<dbReference type="CDD" id="cd00613">
    <property type="entry name" value="GDC-P"/>
    <property type="match status" value="2"/>
</dbReference>
<dbReference type="FunFam" id="3.40.640.10:FF:000005">
    <property type="entry name" value="Glycine dehydrogenase (decarboxylating), mitochondrial"/>
    <property type="match status" value="1"/>
</dbReference>
<dbReference type="FunFam" id="3.90.1150.10:FF:000007">
    <property type="entry name" value="Glycine dehydrogenase (decarboxylating), mitochondrial"/>
    <property type="match status" value="1"/>
</dbReference>
<dbReference type="FunFam" id="3.40.640.10:FF:000007">
    <property type="entry name" value="glycine dehydrogenase (Decarboxylating), mitochondrial"/>
    <property type="match status" value="1"/>
</dbReference>
<dbReference type="Gene3D" id="3.90.1150.10">
    <property type="entry name" value="Aspartate Aminotransferase, domain 1"/>
    <property type="match status" value="2"/>
</dbReference>
<dbReference type="Gene3D" id="3.40.640.10">
    <property type="entry name" value="Type I PLP-dependent aspartate aminotransferase-like (Major domain)"/>
    <property type="match status" value="2"/>
</dbReference>
<dbReference type="HAMAP" id="MF_00711">
    <property type="entry name" value="GcvP"/>
    <property type="match status" value="1"/>
</dbReference>
<dbReference type="InterPro" id="IPR003437">
    <property type="entry name" value="GcvP"/>
</dbReference>
<dbReference type="InterPro" id="IPR049316">
    <property type="entry name" value="GDC-P_C"/>
</dbReference>
<dbReference type="InterPro" id="IPR049315">
    <property type="entry name" value="GDC-P_N"/>
</dbReference>
<dbReference type="InterPro" id="IPR020581">
    <property type="entry name" value="GDC_P"/>
</dbReference>
<dbReference type="InterPro" id="IPR015424">
    <property type="entry name" value="PyrdxlP-dep_Trfase"/>
</dbReference>
<dbReference type="InterPro" id="IPR015421">
    <property type="entry name" value="PyrdxlP-dep_Trfase_major"/>
</dbReference>
<dbReference type="InterPro" id="IPR015422">
    <property type="entry name" value="PyrdxlP-dep_Trfase_small"/>
</dbReference>
<dbReference type="NCBIfam" id="TIGR00461">
    <property type="entry name" value="gcvP"/>
    <property type="match status" value="1"/>
</dbReference>
<dbReference type="NCBIfam" id="NF003346">
    <property type="entry name" value="PRK04366.1"/>
    <property type="match status" value="1"/>
</dbReference>
<dbReference type="PANTHER" id="PTHR11773:SF1">
    <property type="entry name" value="GLYCINE DEHYDROGENASE (DECARBOXYLATING), MITOCHONDRIAL"/>
    <property type="match status" value="1"/>
</dbReference>
<dbReference type="PANTHER" id="PTHR11773">
    <property type="entry name" value="GLYCINE DEHYDROGENASE, DECARBOXYLATING"/>
    <property type="match status" value="1"/>
</dbReference>
<dbReference type="Pfam" id="PF21478">
    <property type="entry name" value="GcvP2_C"/>
    <property type="match status" value="1"/>
</dbReference>
<dbReference type="Pfam" id="PF02347">
    <property type="entry name" value="GDC-P"/>
    <property type="match status" value="2"/>
</dbReference>
<dbReference type="SUPFAM" id="SSF53383">
    <property type="entry name" value="PLP-dependent transferases"/>
    <property type="match status" value="2"/>
</dbReference>
<keyword id="KW-0560">Oxidoreductase</keyword>
<keyword id="KW-0663">Pyridoxal phosphate</keyword>
<comment type="function">
    <text evidence="1">The glycine cleavage system catalyzes the degradation of glycine. The P protein binds the alpha-amino group of glycine through its pyridoxal phosphate cofactor; CO(2) is released and the remaining methylamine moiety is then transferred to the lipoamide cofactor of the H protein.</text>
</comment>
<comment type="catalytic activity">
    <reaction evidence="1">
        <text>N(6)-[(R)-lipoyl]-L-lysyl-[glycine-cleavage complex H protein] + glycine + H(+) = N(6)-[(R)-S(8)-aminomethyldihydrolipoyl]-L-lysyl-[glycine-cleavage complex H protein] + CO2</text>
        <dbReference type="Rhea" id="RHEA:24304"/>
        <dbReference type="Rhea" id="RHEA-COMP:10494"/>
        <dbReference type="Rhea" id="RHEA-COMP:10495"/>
        <dbReference type="ChEBI" id="CHEBI:15378"/>
        <dbReference type="ChEBI" id="CHEBI:16526"/>
        <dbReference type="ChEBI" id="CHEBI:57305"/>
        <dbReference type="ChEBI" id="CHEBI:83099"/>
        <dbReference type="ChEBI" id="CHEBI:83143"/>
        <dbReference type="EC" id="1.4.4.2"/>
    </reaction>
</comment>
<comment type="cofactor">
    <cofactor evidence="1">
        <name>pyridoxal 5'-phosphate</name>
        <dbReference type="ChEBI" id="CHEBI:597326"/>
    </cofactor>
</comment>
<comment type="subunit">
    <text evidence="1">The glycine cleavage system is composed of four proteins: P, T, L and H.</text>
</comment>
<comment type="similarity">
    <text evidence="1">Belongs to the GcvP family.</text>
</comment>
<feature type="chain" id="PRO_1000045572" description="Glycine dehydrogenase (decarboxylating)">
    <location>
        <begin position="1"/>
        <end position="975"/>
    </location>
</feature>
<feature type="modified residue" description="N6-(pyridoxal phosphate)lysine" evidence="1">
    <location>
        <position position="723"/>
    </location>
</feature>
<proteinExistence type="inferred from homology"/>
<protein>
    <recommendedName>
        <fullName evidence="1">Glycine dehydrogenase (decarboxylating)</fullName>
        <ecNumber evidence="1">1.4.4.2</ecNumber>
    </recommendedName>
    <alternativeName>
        <fullName evidence="1">Glycine cleavage system P-protein</fullName>
    </alternativeName>
    <alternativeName>
        <fullName evidence="1">Glycine decarboxylase</fullName>
    </alternativeName>
    <alternativeName>
        <fullName evidence="1">Glycine dehydrogenase (aminomethyl-transferring)</fullName>
    </alternativeName>
</protein>
<organism>
    <name type="scientific">Burkholderia mallei (strain NCTC 10229)</name>
    <dbReference type="NCBI Taxonomy" id="412022"/>
    <lineage>
        <taxon>Bacteria</taxon>
        <taxon>Pseudomonadati</taxon>
        <taxon>Pseudomonadota</taxon>
        <taxon>Betaproteobacteria</taxon>
        <taxon>Burkholderiales</taxon>
        <taxon>Burkholderiaceae</taxon>
        <taxon>Burkholderia</taxon>
        <taxon>pseudomallei group</taxon>
    </lineage>
</organism>
<reference key="1">
    <citation type="journal article" date="2010" name="Genome Biol. Evol.">
        <title>Continuing evolution of Burkholderia mallei through genome reduction and large-scale rearrangements.</title>
        <authorList>
            <person name="Losada L."/>
            <person name="Ronning C.M."/>
            <person name="DeShazer D."/>
            <person name="Woods D."/>
            <person name="Fedorova N."/>
            <person name="Kim H.S."/>
            <person name="Shabalina S.A."/>
            <person name="Pearson T.R."/>
            <person name="Brinkac L."/>
            <person name="Tan P."/>
            <person name="Nandi T."/>
            <person name="Crabtree J."/>
            <person name="Badger J."/>
            <person name="Beckstrom-Sternberg S."/>
            <person name="Saqib M."/>
            <person name="Schutzer S.E."/>
            <person name="Keim P."/>
            <person name="Nierman W.C."/>
        </authorList>
    </citation>
    <scope>NUCLEOTIDE SEQUENCE [LARGE SCALE GENOMIC DNA]</scope>
    <source>
        <strain>NCTC 10229</strain>
    </source>
</reference>
<accession>A2S6F6</accession>
<sequence length="975" mass="104460">MKLEHPDRLMNRTPLSLAALETHDAFAERHIGPDAASQQAMLDTLGFATRAALIDAVIPASIRRAETLPLGPFAQPKSEAEALAALRALADKNQVFRSYIGQGYYDTHTPAVILRNVLENPAWYTAYTPYQPEISQGRLEALLNFQQMVADLTGLEISNASLLDEATAAAEAMTLLQRVGKPQSNVFYVADDVLPQTLEVIKTRAKPIGIEVKSGPAADAAAANAFGVLLQYPGANGDVRDYRALADAIHAAGGHVVVAADILALTVLMPPGEWGADVAVGNTQRFGVPMGFGGPHAAYMAVRDEFKRQMPGRLVGVTVDAQGKPALRLALQTREQHIRREKATSNVCTAQALLAIMASMYAVYHGPRGLKTIALRVNRIAALLAAGIRHLGYATVNDTFFDTLTIDTGARTAQLHAFAQAKRINLRRAGDTRVGVSVDETTTRADLADLLTIFAQAAGATAPDIDALDAGLLPAPALPPSLERTSAYLTHHVFNRHHSETEMLRYLRSLSDKDLALDRSMIPLGSCTMKLNATSEMLPVTWPEFGRIHPFAPAEQTVGYREMIDQLEQMLVAATGYAAVSLQPNAGSQGEYAGLLIIHAYHESRGESHRDVCLIPASAHGTNPASAHMAGMKVVVVACDAQGNVDIADLKAKADAHSHDLAAIMITYPSTHGVFEQNVREICEIVHAHGGQVYVDGANMNAMVGLTAPGQFGGDVSHLNLHKTFCIPHGGGGPGVGPVAVGPHLAKFLPNQRSTGYARGEDGIGAVSAAPYGSASILPISWMYIAMMGAKNLTAATETAILNANYIAKRLAPHYPVLYSGPGGLVAHECILDLRPIKDSSGITVDDVAKRLMDYGFHAPTMSFPVPGTLMVEPTESESQEELDRFIAAMIAIRDEIRAVEEGRADREDNPLRHAPHTAAVVTANEWPHAYSREQAAFPVASLVANKYWPPVGRADNAYGDRNLFCSCVPVSDYA</sequence>
<gene>
    <name evidence="1" type="primary">gcvP</name>
    <name type="ordered locus">BMA10229_A1544</name>
</gene>